<name>LGT_TOLAT</name>
<evidence type="ECO:0000255" key="1">
    <source>
        <dbReference type="HAMAP-Rule" id="MF_01147"/>
    </source>
</evidence>
<organism>
    <name type="scientific">Tolumonas auensis (strain DSM 9187 / NBRC 110442 / TA 4)</name>
    <dbReference type="NCBI Taxonomy" id="595494"/>
    <lineage>
        <taxon>Bacteria</taxon>
        <taxon>Pseudomonadati</taxon>
        <taxon>Pseudomonadota</taxon>
        <taxon>Gammaproteobacteria</taxon>
        <taxon>Aeromonadales</taxon>
        <taxon>Aeromonadaceae</taxon>
        <taxon>Tolumonas</taxon>
    </lineage>
</organism>
<accession>C4LD03</accession>
<feature type="chain" id="PRO_1000213661" description="Phosphatidylglycerol--prolipoprotein diacylglyceryl transferase">
    <location>
        <begin position="1"/>
        <end position="258"/>
    </location>
</feature>
<feature type="transmembrane region" description="Helical" evidence="1">
    <location>
        <begin position="9"/>
        <end position="29"/>
    </location>
</feature>
<feature type="transmembrane region" description="Helical" evidence="1">
    <location>
        <begin position="53"/>
        <end position="73"/>
    </location>
</feature>
<feature type="transmembrane region" description="Helical" evidence="1">
    <location>
        <begin position="90"/>
        <end position="110"/>
    </location>
</feature>
<feature type="transmembrane region" description="Helical" evidence="1">
    <location>
        <begin position="117"/>
        <end position="139"/>
    </location>
</feature>
<feature type="transmembrane region" description="Helical" evidence="1">
    <location>
        <begin position="169"/>
        <end position="189"/>
    </location>
</feature>
<feature type="transmembrane region" description="Helical" evidence="1">
    <location>
        <begin position="198"/>
        <end position="218"/>
    </location>
</feature>
<feature type="transmembrane region" description="Helical" evidence="1">
    <location>
        <begin position="230"/>
        <end position="250"/>
    </location>
</feature>
<feature type="binding site" evidence="1">
    <location>
        <position position="137"/>
    </location>
    <ligand>
        <name>a 1,2-diacyl-sn-glycero-3-phospho-(1'-sn-glycerol)</name>
        <dbReference type="ChEBI" id="CHEBI:64716"/>
    </ligand>
</feature>
<keyword id="KW-0997">Cell inner membrane</keyword>
<keyword id="KW-1003">Cell membrane</keyword>
<keyword id="KW-0472">Membrane</keyword>
<keyword id="KW-1185">Reference proteome</keyword>
<keyword id="KW-0808">Transferase</keyword>
<keyword id="KW-0812">Transmembrane</keyword>
<keyword id="KW-1133">Transmembrane helix</keyword>
<sequence length="258" mass="29105">MLFWNADPILIQLGPIAVHWYGALFATGFLLGYQLMQRIYRQEGRPTEQLDKLLTYIFIGTVVGARLAHTLIYEPEYYLAHPIDILKIWEGGLASHGGGIGVLLAIWLFVRQHPENKFLWLADRLAIPTALTGCFIRLGNFMNSEIIGNSTDGSWGVVFERIDTLPRHPVQLYEAASYFAIFVLLLMLFRTTKSKQTGFLFGLFLTLVFAARFIIEYFKTPQAAYEAGNLISVGQWLSVPFVLAGIVLMLLSAKEKAR</sequence>
<dbReference type="EC" id="2.5.1.145" evidence="1"/>
<dbReference type="EMBL" id="CP001616">
    <property type="protein sequence ID" value="ACQ94534.1"/>
    <property type="molecule type" value="Genomic_DNA"/>
</dbReference>
<dbReference type="RefSeq" id="WP_015879983.1">
    <property type="nucleotide sequence ID" value="NC_012691.1"/>
</dbReference>
<dbReference type="SMR" id="C4LD03"/>
<dbReference type="STRING" id="595494.Tola_2945"/>
<dbReference type="KEGG" id="tau:Tola_2945"/>
<dbReference type="eggNOG" id="COG0682">
    <property type="taxonomic scope" value="Bacteria"/>
</dbReference>
<dbReference type="HOGENOM" id="CLU_013386_1_0_6"/>
<dbReference type="OrthoDB" id="871140at2"/>
<dbReference type="UniPathway" id="UPA00664"/>
<dbReference type="Proteomes" id="UP000009073">
    <property type="component" value="Chromosome"/>
</dbReference>
<dbReference type="GO" id="GO:0005886">
    <property type="term" value="C:plasma membrane"/>
    <property type="evidence" value="ECO:0007669"/>
    <property type="project" value="UniProtKB-SubCell"/>
</dbReference>
<dbReference type="GO" id="GO:0008961">
    <property type="term" value="F:phosphatidylglycerol-prolipoprotein diacylglyceryl transferase activity"/>
    <property type="evidence" value="ECO:0007669"/>
    <property type="project" value="UniProtKB-UniRule"/>
</dbReference>
<dbReference type="GO" id="GO:0042158">
    <property type="term" value="P:lipoprotein biosynthetic process"/>
    <property type="evidence" value="ECO:0007669"/>
    <property type="project" value="UniProtKB-UniRule"/>
</dbReference>
<dbReference type="HAMAP" id="MF_01147">
    <property type="entry name" value="Lgt"/>
    <property type="match status" value="1"/>
</dbReference>
<dbReference type="InterPro" id="IPR001640">
    <property type="entry name" value="Lgt"/>
</dbReference>
<dbReference type="NCBIfam" id="TIGR00544">
    <property type="entry name" value="lgt"/>
    <property type="match status" value="1"/>
</dbReference>
<dbReference type="PANTHER" id="PTHR30589:SF0">
    <property type="entry name" value="PHOSPHATIDYLGLYCEROL--PROLIPOPROTEIN DIACYLGLYCERYL TRANSFERASE"/>
    <property type="match status" value="1"/>
</dbReference>
<dbReference type="PANTHER" id="PTHR30589">
    <property type="entry name" value="PROLIPOPROTEIN DIACYLGLYCERYL TRANSFERASE"/>
    <property type="match status" value="1"/>
</dbReference>
<dbReference type="Pfam" id="PF01790">
    <property type="entry name" value="LGT"/>
    <property type="match status" value="1"/>
</dbReference>
<dbReference type="PROSITE" id="PS01311">
    <property type="entry name" value="LGT"/>
    <property type="match status" value="1"/>
</dbReference>
<protein>
    <recommendedName>
        <fullName evidence="1">Phosphatidylglycerol--prolipoprotein diacylglyceryl transferase</fullName>
        <ecNumber evidence="1">2.5.1.145</ecNumber>
    </recommendedName>
</protein>
<proteinExistence type="inferred from homology"/>
<comment type="function">
    <text evidence="1">Catalyzes the transfer of the diacylglyceryl group from phosphatidylglycerol to the sulfhydryl group of the N-terminal cysteine of a prolipoprotein, the first step in the formation of mature lipoproteins.</text>
</comment>
<comment type="catalytic activity">
    <reaction evidence="1">
        <text>L-cysteinyl-[prolipoprotein] + a 1,2-diacyl-sn-glycero-3-phospho-(1'-sn-glycerol) = an S-1,2-diacyl-sn-glyceryl-L-cysteinyl-[prolipoprotein] + sn-glycerol 1-phosphate + H(+)</text>
        <dbReference type="Rhea" id="RHEA:56712"/>
        <dbReference type="Rhea" id="RHEA-COMP:14679"/>
        <dbReference type="Rhea" id="RHEA-COMP:14680"/>
        <dbReference type="ChEBI" id="CHEBI:15378"/>
        <dbReference type="ChEBI" id="CHEBI:29950"/>
        <dbReference type="ChEBI" id="CHEBI:57685"/>
        <dbReference type="ChEBI" id="CHEBI:64716"/>
        <dbReference type="ChEBI" id="CHEBI:140658"/>
        <dbReference type="EC" id="2.5.1.145"/>
    </reaction>
</comment>
<comment type="pathway">
    <text evidence="1">Protein modification; lipoprotein biosynthesis (diacylglyceryl transfer).</text>
</comment>
<comment type="subcellular location">
    <subcellularLocation>
        <location evidence="1">Cell inner membrane</location>
        <topology evidence="1">Multi-pass membrane protein</topology>
    </subcellularLocation>
</comment>
<comment type="similarity">
    <text evidence="1">Belongs to the Lgt family.</text>
</comment>
<reference key="1">
    <citation type="submission" date="2009-05" db="EMBL/GenBank/DDBJ databases">
        <title>Complete sequence of Tolumonas auensis DSM 9187.</title>
        <authorList>
            <consortium name="US DOE Joint Genome Institute"/>
            <person name="Lucas S."/>
            <person name="Copeland A."/>
            <person name="Lapidus A."/>
            <person name="Glavina del Rio T."/>
            <person name="Tice H."/>
            <person name="Bruce D."/>
            <person name="Goodwin L."/>
            <person name="Pitluck S."/>
            <person name="Chertkov O."/>
            <person name="Brettin T."/>
            <person name="Detter J.C."/>
            <person name="Han C."/>
            <person name="Larimer F."/>
            <person name="Land M."/>
            <person name="Hauser L."/>
            <person name="Kyrpides N."/>
            <person name="Mikhailova N."/>
            <person name="Spring S."/>
            <person name="Beller H."/>
        </authorList>
    </citation>
    <scope>NUCLEOTIDE SEQUENCE [LARGE SCALE GENOMIC DNA]</scope>
    <source>
        <strain>DSM 9187 / NBRC 110442 / TA 4</strain>
    </source>
</reference>
<gene>
    <name evidence="1" type="primary">lgt</name>
    <name type="ordered locus">Tola_2945</name>
</gene>